<evidence type="ECO:0000255" key="1">
    <source>
        <dbReference type="HAMAP-Rule" id="MF_00318"/>
    </source>
</evidence>
<dbReference type="EC" id="4.2.1.11" evidence="1"/>
<dbReference type="EMBL" id="CP001649">
    <property type="protein sequence ID" value="ACS81474.1"/>
    <property type="molecule type" value="Genomic_DNA"/>
</dbReference>
<dbReference type="RefSeq" id="WP_015853290.1">
    <property type="nucleotide sequence ID" value="NC_012881.1"/>
</dbReference>
<dbReference type="SMR" id="C6BSL8"/>
<dbReference type="STRING" id="526222.Desal_3426"/>
<dbReference type="KEGG" id="dsa:Desal_3426"/>
<dbReference type="eggNOG" id="COG0148">
    <property type="taxonomic scope" value="Bacteria"/>
</dbReference>
<dbReference type="HOGENOM" id="CLU_031223_2_1_7"/>
<dbReference type="OrthoDB" id="9804716at2"/>
<dbReference type="UniPathway" id="UPA00109">
    <property type="reaction ID" value="UER00187"/>
</dbReference>
<dbReference type="Proteomes" id="UP000002601">
    <property type="component" value="Chromosome"/>
</dbReference>
<dbReference type="GO" id="GO:0009986">
    <property type="term" value="C:cell surface"/>
    <property type="evidence" value="ECO:0007669"/>
    <property type="project" value="UniProtKB-SubCell"/>
</dbReference>
<dbReference type="GO" id="GO:0005576">
    <property type="term" value="C:extracellular region"/>
    <property type="evidence" value="ECO:0007669"/>
    <property type="project" value="UniProtKB-SubCell"/>
</dbReference>
<dbReference type="GO" id="GO:0000015">
    <property type="term" value="C:phosphopyruvate hydratase complex"/>
    <property type="evidence" value="ECO:0007669"/>
    <property type="project" value="InterPro"/>
</dbReference>
<dbReference type="GO" id="GO:0000287">
    <property type="term" value="F:magnesium ion binding"/>
    <property type="evidence" value="ECO:0007669"/>
    <property type="project" value="UniProtKB-UniRule"/>
</dbReference>
<dbReference type="GO" id="GO:0004634">
    <property type="term" value="F:phosphopyruvate hydratase activity"/>
    <property type="evidence" value="ECO:0007669"/>
    <property type="project" value="UniProtKB-UniRule"/>
</dbReference>
<dbReference type="GO" id="GO:0006096">
    <property type="term" value="P:glycolytic process"/>
    <property type="evidence" value="ECO:0007669"/>
    <property type="project" value="UniProtKB-UniRule"/>
</dbReference>
<dbReference type="CDD" id="cd03313">
    <property type="entry name" value="enolase"/>
    <property type="match status" value="1"/>
</dbReference>
<dbReference type="FunFam" id="3.20.20.120:FF:000001">
    <property type="entry name" value="Enolase"/>
    <property type="match status" value="1"/>
</dbReference>
<dbReference type="FunFam" id="3.30.390.10:FF:000001">
    <property type="entry name" value="Enolase"/>
    <property type="match status" value="1"/>
</dbReference>
<dbReference type="Gene3D" id="3.20.20.120">
    <property type="entry name" value="Enolase-like C-terminal domain"/>
    <property type="match status" value="1"/>
</dbReference>
<dbReference type="Gene3D" id="3.30.390.10">
    <property type="entry name" value="Enolase-like, N-terminal domain"/>
    <property type="match status" value="1"/>
</dbReference>
<dbReference type="HAMAP" id="MF_00318">
    <property type="entry name" value="Enolase"/>
    <property type="match status" value="1"/>
</dbReference>
<dbReference type="InterPro" id="IPR000941">
    <property type="entry name" value="Enolase"/>
</dbReference>
<dbReference type="InterPro" id="IPR036849">
    <property type="entry name" value="Enolase-like_C_sf"/>
</dbReference>
<dbReference type="InterPro" id="IPR029017">
    <property type="entry name" value="Enolase-like_N"/>
</dbReference>
<dbReference type="InterPro" id="IPR020810">
    <property type="entry name" value="Enolase_C"/>
</dbReference>
<dbReference type="InterPro" id="IPR020809">
    <property type="entry name" value="Enolase_CS"/>
</dbReference>
<dbReference type="InterPro" id="IPR020811">
    <property type="entry name" value="Enolase_N"/>
</dbReference>
<dbReference type="NCBIfam" id="TIGR01060">
    <property type="entry name" value="eno"/>
    <property type="match status" value="1"/>
</dbReference>
<dbReference type="PANTHER" id="PTHR11902">
    <property type="entry name" value="ENOLASE"/>
    <property type="match status" value="1"/>
</dbReference>
<dbReference type="PANTHER" id="PTHR11902:SF1">
    <property type="entry name" value="ENOLASE"/>
    <property type="match status" value="1"/>
</dbReference>
<dbReference type="Pfam" id="PF00113">
    <property type="entry name" value="Enolase_C"/>
    <property type="match status" value="1"/>
</dbReference>
<dbReference type="Pfam" id="PF03952">
    <property type="entry name" value="Enolase_N"/>
    <property type="match status" value="1"/>
</dbReference>
<dbReference type="PIRSF" id="PIRSF001400">
    <property type="entry name" value="Enolase"/>
    <property type="match status" value="1"/>
</dbReference>
<dbReference type="PRINTS" id="PR00148">
    <property type="entry name" value="ENOLASE"/>
</dbReference>
<dbReference type="SFLD" id="SFLDS00001">
    <property type="entry name" value="Enolase"/>
    <property type="match status" value="1"/>
</dbReference>
<dbReference type="SFLD" id="SFLDF00002">
    <property type="entry name" value="enolase"/>
    <property type="match status" value="1"/>
</dbReference>
<dbReference type="SMART" id="SM01192">
    <property type="entry name" value="Enolase_C"/>
    <property type="match status" value="1"/>
</dbReference>
<dbReference type="SMART" id="SM01193">
    <property type="entry name" value="Enolase_N"/>
    <property type="match status" value="1"/>
</dbReference>
<dbReference type="SUPFAM" id="SSF51604">
    <property type="entry name" value="Enolase C-terminal domain-like"/>
    <property type="match status" value="1"/>
</dbReference>
<dbReference type="SUPFAM" id="SSF54826">
    <property type="entry name" value="Enolase N-terminal domain-like"/>
    <property type="match status" value="1"/>
</dbReference>
<dbReference type="PROSITE" id="PS00164">
    <property type="entry name" value="ENOLASE"/>
    <property type="match status" value="1"/>
</dbReference>
<organism>
    <name type="scientific">Maridesulfovibrio salexigens (strain ATCC 14822 / DSM 2638 / NCIMB 8403 / VKM B-1763)</name>
    <name type="common">Desulfovibrio salexigens</name>
    <dbReference type="NCBI Taxonomy" id="526222"/>
    <lineage>
        <taxon>Bacteria</taxon>
        <taxon>Pseudomonadati</taxon>
        <taxon>Thermodesulfobacteriota</taxon>
        <taxon>Desulfovibrionia</taxon>
        <taxon>Desulfovibrionales</taxon>
        <taxon>Desulfovibrionaceae</taxon>
        <taxon>Maridesulfovibrio</taxon>
    </lineage>
</organism>
<gene>
    <name evidence="1" type="primary">eno</name>
    <name type="ordered locus">Desal_3426</name>
</gene>
<protein>
    <recommendedName>
        <fullName evidence="1">Enolase</fullName>
        <ecNumber evidence="1">4.2.1.11</ecNumber>
    </recommendedName>
    <alternativeName>
        <fullName evidence="1">2-phospho-D-glycerate hydro-lyase</fullName>
    </alternativeName>
    <alternativeName>
        <fullName evidence="1">2-phosphoglycerate dehydratase</fullName>
    </alternativeName>
</protein>
<proteinExistence type="inferred from homology"/>
<accession>C6BSL8</accession>
<keyword id="KW-0963">Cytoplasm</keyword>
<keyword id="KW-0324">Glycolysis</keyword>
<keyword id="KW-0456">Lyase</keyword>
<keyword id="KW-0460">Magnesium</keyword>
<keyword id="KW-0479">Metal-binding</keyword>
<keyword id="KW-1185">Reference proteome</keyword>
<keyword id="KW-0964">Secreted</keyword>
<sequence length="430" mass="46164">MSTITAVWAREILDSRGNPTVEVEVVLESGATGRAAVPSGASTGTREALELRDGDKDRYKGKGVQVAVANVREEIAEALVGQDALRQVNIDNILIELDGTENKERLGANAMLGVSMAVARAGANLLGIPLYQYLGGVNGKLLPVPLMNIINGGEHAPNNLDIQEFMIMPIGAETFAEALRMGAEIFHTLKGLLAADGHNTAVGDEGGFAPNLESHAQAFEYIMKAIEAAGYRPGADVALAIDAAASEFYKDGKYVLAGEGKEFDAQGMIDFYTDFVERFPLISIEDGLAEGDWEGWKKMTDDLGEKIQLVGDDLFVTNPEILAEGIEQGACNSILIKLNQIGTLTETLDTMELAKTAGYTNVVSHRSGETSDHFIADLAVGLNAGQIKTGSLCRSDRLAKYNQLLRIEEDLEDDGIYYGPALKEAFFGED</sequence>
<reference key="1">
    <citation type="submission" date="2009-06" db="EMBL/GenBank/DDBJ databases">
        <title>Complete sequence of Desulfovibrio salexigens DSM 2638.</title>
        <authorList>
            <consortium name="US DOE Joint Genome Institute"/>
            <person name="Lucas S."/>
            <person name="Copeland A."/>
            <person name="Lapidus A."/>
            <person name="Glavina del Rio T."/>
            <person name="Tice H."/>
            <person name="Bruce D."/>
            <person name="Goodwin L."/>
            <person name="Pitluck S."/>
            <person name="Munk A.C."/>
            <person name="Brettin T."/>
            <person name="Detter J.C."/>
            <person name="Han C."/>
            <person name="Tapia R."/>
            <person name="Larimer F."/>
            <person name="Land M."/>
            <person name="Hauser L."/>
            <person name="Kyrpides N."/>
            <person name="Anderson I."/>
            <person name="Wall J.D."/>
            <person name="Arkin A.P."/>
            <person name="Dehal P."/>
            <person name="Chivian D."/>
            <person name="Giles B."/>
            <person name="Hazen T.C."/>
        </authorList>
    </citation>
    <scope>NUCLEOTIDE SEQUENCE [LARGE SCALE GENOMIC DNA]</scope>
    <source>
        <strain>ATCC 14822 / DSM 2638 / NCIMB 8403 / VKM B-1763</strain>
    </source>
</reference>
<comment type="function">
    <text evidence="1">Catalyzes the reversible conversion of 2-phosphoglycerate (2-PG) into phosphoenolpyruvate (PEP). It is essential for the degradation of carbohydrates via glycolysis.</text>
</comment>
<comment type="catalytic activity">
    <reaction evidence="1">
        <text>(2R)-2-phosphoglycerate = phosphoenolpyruvate + H2O</text>
        <dbReference type="Rhea" id="RHEA:10164"/>
        <dbReference type="ChEBI" id="CHEBI:15377"/>
        <dbReference type="ChEBI" id="CHEBI:58289"/>
        <dbReference type="ChEBI" id="CHEBI:58702"/>
        <dbReference type="EC" id="4.2.1.11"/>
    </reaction>
</comment>
<comment type="cofactor">
    <cofactor evidence="1">
        <name>Mg(2+)</name>
        <dbReference type="ChEBI" id="CHEBI:18420"/>
    </cofactor>
    <text evidence="1">Binds a second Mg(2+) ion via substrate during catalysis.</text>
</comment>
<comment type="pathway">
    <text evidence="1">Carbohydrate degradation; glycolysis; pyruvate from D-glyceraldehyde 3-phosphate: step 4/5.</text>
</comment>
<comment type="subcellular location">
    <subcellularLocation>
        <location evidence="1">Cytoplasm</location>
    </subcellularLocation>
    <subcellularLocation>
        <location evidence="1">Secreted</location>
    </subcellularLocation>
    <subcellularLocation>
        <location evidence="1">Cell surface</location>
    </subcellularLocation>
    <text evidence="1">Fractions of enolase are present in both the cytoplasm and on the cell surface.</text>
</comment>
<comment type="similarity">
    <text evidence="1">Belongs to the enolase family.</text>
</comment>
<feature type="chain" id="PRO_1000205088" description="Enolase">
    <location>
        <begin position="1"/>
        <end position="430"/>
    </location>
</feature>
<feature type="active site" description="Proton donor" evidence="1">
    <location>
        <position position="205"/>
    </location>
</feature>
<feature type="active site" description="Proton acceptor" evidence="1">
    <location>
        <position position="337"/>
    </location>
</feature>
<feature type="binding site" evidence="1">
    <location>
        <position position="163"/>
    </location>
    <ligand>
        <name>(2R)-2-phosphoglycerate</name>
        <dbReference type="ChEBI" id="CHEBI:58289"/>
    </ligand>
</feature>
<feature type="binding site" evidence="1">
    <location>
        <position position="242"/>
    </location>
    <ligand>
        <name>Mg(2+)</name>
        <dbReference type="ChEBI" id="CHEBI:18420"/>
    </ligand>
</feature>
<feature type="binding site" evidence="1">
    <location>
        <position position="285"/>
    </location>
    <ligand>
        <name>Mg(2+)</name>
        <dbReference type="ChEBI" id="CHEBI:18420"/>
    </ligand>
</feature>
<feature type="binding site" evidence="1">
    <location>
        <position position="312"/>
    </location>
    <ligand>
        <name>Mg(2+)</name>
        <dbReference type="ChEBI" id="CHEBI:18420"/>
    </ligand>
</feature>
<feature type="binding site" evidence="1">
    <location>
        <position position="337"/>
    </location>
    <ligand>
        <name>(2R)-2-phosphoglycerate</name>
        <dbReference type="ChEBI" id="CHEBI:58289"/>
    </ligand>
</feature>
<feature type="binding site" evidence="1">
    <location>
        <position position="366"/>
    </location>
    <ligand>
        <name>(2R)-2-phosphoglycerate</name>
        <dbReference type="ChEBI" id="CHEBI:58289"/>
    </ligand>
</feature>
<feature type="binding site" evidence="1">
    <location>
        <position position="367"/>
    </location>
    <ligand>
        <name>(2R)-2-phosphoglycerate</name>
        <dbReference type="ChEBI" id="CHEBI:58289"/>
    </ligand>
</feature>
<feature type="binding site" evidence="1">
    <location>
        <position position="388"/>
    </location>
    <ligand>
        <name>(2R)-2-phosphoglycerate</name>
        <dbReference type="ChEBI" id="CHEBI:58289"/>
    </ligand>
</feature>
<name>ENO_MARSD</name>